<keyword id="KW-0067">ATP-binding</keyword>
<keyword id="KW-0963">Cytoplasm</keyword>
<keyword id="KW-0235">DNA replication</keyword>
<keyword id="KW-0238">DNA-binding</keyword>
<keyword id="KW-0446">Lipid-binding</keyword>
<keyword id="KW-0547">Nucleotide-binding</keyword>
<accession>B0RLI8</accession>
<evidence type="ECO:0000255" key="1">
    <source>
        <dbReference type="HAMAP-Rule" id="MF_00377"/>
    </source>
</evidence>
<sequence length="442" mass="49527">MDAWPRCLERLEAEFPPEDVHTWLKPLQAEDRGDSIVLYAPNAFIVEQVRERYLPRIRELLAYFAGNGEVALAVGSRPRAPEPLPAPQAVASAPAAAPIVPFAGNLDSHYTFANFVEGRSNQLGLAAAIQAAQKPGDRAHNPLLLYGSTGLGKTHLMFAAGNALRQANPAAKVMYLRSEQFFSAMIRALQDKAMDQFKRQFQQIDALLIDDIQFFAGKDRTQEEFFHTFNALFDGRQQIILTCDRYPREVEGLEPRLKSRLAWGLSVAIDPPDFETRAAIVLAKARERGAEIPDDVAFLIAKKMRSNVRDLEGALNTLVARANFTGRSITVEFAQETLRDLLRAQQQAIGIPNIQKTVADYYGLQMKDLLSKRRTRSLARPRQVAMALAKELTEHSLPEIGDAFAGRDHTTVLHACRQIRTLMEADGKLREDWEKLIRKLSE</sequence>
<organism>
    <name type="scientific">Xanthomonas campestris pv. campestris (strain B100)</name>
    <dbReference type="NCBI Taxonomy" id="509169"/>
    <lineage>
        <taxon>Bacteria</taxon>
        <taxon>Pseudomonadati</taxon>
        <taxon>Pseudomonadota</taxon>
        <taxon>Gammaproteobacteria</taxon>
        <taxon>Lysobacterales</taxon>
        <taxon>Lysobacteraceae</taxon>
        <taxon>Xanthomonas</taxon>
    </lineage>
</organism>
<gene>
    <name evidence="1" type="primary">dnaA</name>
    <name type="ordered locus">xcc-b100_0001</name>
</gene>
<reference key="1">
    <citation type="journal article" date="2008" name="J. Biotechnol.">
        <title>The genome of Xanthomonas campestris pv. campestris B100 and its use for the reconstruction of metabolic pathways involved in xanthan biosynthesis.</title>
        <authorList>
            <person name="Vorhoelter F.-J."/>
            <person name="Schneiker S."/>
            <person name="Goesmann A."/>
            <person name="Krause L."/>
            <person name="Bekel T."/>
            <person name="Kaiser O."/>
            <person name="Linke B."/>
            <person name="Patschkowski T."/>
            <person name="Rueckert C."/>
            <person name="Schmid J."/>
            <person name="Sidhu V.K."/>
            <person name="Sieber V."/>
            <person name="Tauch A."/>
            <person name="Watt S.A."/>
            <person name="Weisshaar B."/>
            <person name="Becker A."/>
            <person name="Niehaus K."/>
            <person name="Puehler A."/>
        </authorList>
    </citation>
    <scope>NUCLEOTIDE SEQUENCE [LARGE SCALE GENOMIC DNA]</scope>
    <source>
        <strain>B100</strain>
    </source>
</reference>
<proteinExistence type="inferred from homology"/>
<name>DNAA_XANCB</name>
<dbReference type="EMBL" id="AM920689">
    <property type="protein sequence ID" value="CAP49329.1"/>
    <property type="molecule type" value="Genomic_DNA"/>
</dbReference>
<dbReference type="SMR" id="B0RLI8"/>
<dbReference type="KEGG" id="xca:xcc-b100_0001"/>
<dbReference type="HOGENOM" id="CLU_026910_0_1_6"/>
<dbReference type="Proteomes" id="UP000001188">
    <property type="component" value="Chromosome"/>
</dbReference>
<dbReference type="GO" id="GO:0005737">
    <property type="term" value="C:cytoplasm"/>
    <property type="evidence" value="ECO:0007669"/>
    <property type="project" value="UniProtKB-SubCell"/>
</dbReference>
<dbReference type="GO" id="GO:0005886">
    <property type="term" value="C:plasma membrane"/>
    <property type="evidence" value="ECO:0007669"/>
    <property type="project" value="TreeGrafter"/>
</dbReference>
<dbReference type="GO" id="GO:0005524">
    <property type="term" value="F:ATP binding"/>
    <property type="evidence" value="ECO:0007669"/>
    <property type="project" value="UniProtKB-UniRule"/>
</dbReference>
<dbReference type="GO" id="GO:0016887">
    <property type="term" value="F:ATP hydrolysis activity"/>
    <property type="evidence" value="ECO:0007669"/>
    <property type="project" value="InterPro"/>
</dbReference>
<dbReference type="GO" id="GO:0003688">
    <property type="term" value="F:DNA replication origin binding"/>
    <property type="evidence" value="ECO:0007669"/>
    <property type="project" value="UniProtKB-UniRule"/>
</dbReference>
<dbReference type="GO" id="GO:0008289">
    <property type="term" value="F:lipid binding"/>
    <property type="evidence" value="ECO:0007669"/>
    <property type="project" value="UniProtKB-KW"/>
</dbReference>
<dbReference type="GO" id="GO:0006270">
    <property type="term" value="P:DNA replication initiation"/>
    <property type="evidence" value="ECO:0007669"/>
    <property type="project" value="UniProtKB-UniRule"/>
</dbReference>
<dbReference type="GO" id="GO:0006275">
    <property type="term" value="P:regulation of DNA replication"/>
    <property type="evidence" value="ECO:0007669"/>
    <property type="project" value="UniProtKB-UniRule"/>
</dbReference>
<dbReference type="CDD" id="cd00009">
    <property type="entry name" value="AAA"/>
    <property type="match status" value="1"/>
</dbReference>
<dbReference type="CDD" id="cd06571">
    <property type="entry name" value="Bac_DnaA_C"/>
    <property type="match status" value="1"/>
</dbReference>
<dbReference type="FunFam" id="1.10.1750.10:FF:000001">
    <property type="entry name" value="Chromosomal replication initiator protein DnaA"/>
    <property type="match status" value="1"/>
</dbReference>
<dbReference type="FunFam" id="1.10.8.60:FF:000003">
    <property type="entry name" value="Chromosomal replication initiator protein DnaA"/>
    <property type="match status" value="1"/>
</dbReference>
<dbReference type="FunFam" id="3.40.50.300:FF:000103">
    <property type="entry name" value="Chromosomal replication initiator protein DnaA"/>
    <property type="match status" value="1"/>
</dbReference>
<dbReference type="Gene3D" id="1.10.1750.10">
    <property type="match status" value="1"/>
</dbReference>
<dbReference type="Gene3D" id="1.10.8.60">
    <property type="match status" value="1"/>
</dbReference>
<dbReference type="Gene3D" id="3.30.300.180">
    <property type="match status" value="1"/>
</dbReference>
<dbReference type="Gene3D" id="3.40.50.300">
    <property type="entry name" value="P-loop containing nucleotide triphosphate hydrolases"/>
    <property type="match status" value="1"/>
</dbReference>
<dbReference type="HAMAP" id="MF_00377">
    <property type="entry name" value="DnaA_bact"/>
    <property type="match status" value="1"/>
</dbReference>
<dbReference type="InterPro" id="IPR003593">
    <property type="entry name" value="AAA+_ATPase"/>
</dbReference>
<dbReference type="InterPro" id="IPR001957">
    <property type="entry name" value="Chromosome_initiator_DnaA"/>
</dbReference>
<dbReference type="InterPro" id="IPR020591">
    <property type="entry name" value="Chromosome_initiator_DnaA-like"/>
</dbReference>
<dbReference type="InterPro" id="IPR018312">
    <property type="entry name" value="Chromosome_initiator_DnaA_CS"/>
</dbReference>
<dbReference type="InterPro" id="IPR013159">
    <property type="entry name" value="DnaA_C"/>
</dbReference>
<dbReference type="InterPro" id="IPR013317">
    <property type="entry name" value="DnaA_dom"/>
</dbReference>
<dbReference type="InterPro" id="IPR024633">
    <property type="entry name" value="DnaA_N_dom"/>
</dbReference>
<dbReference type="InterPro" id="IPR038454">
    <property type="entry name" value="DnaA_N_sf"/>
</dbReference>
<dbReference type="InterPro" id="IPR027417">
    <property type="entry name" value="P-loop_NTPase"/>
</dbReference>
<dbReference type="InterPro" id="IPR010921">
    <property type="entry name" value="Trp_repressor/repl_initiator"/>
</dbReference>
<dbReference type="NCBIfam" id="TIGR00362">
    <property type="entry name" value="DnaA"/>
    <property type="match status" value="1"/>
</dbReference>
<dbReference type="PANTHER" id="PTHR30050">
    <property type="entry name" value="CHROMOSOMAL REPLICATION INITIATOR PROTEIN DNAA"/>
    <property type="match status" value="1"/>
</dbReference>
<dbReference type="PANTHER" id="PTHR30050:SF2">
    <property type="entry name" value="CHROMOSOMAL REPLICATION INITIATOR PROTEIN DNAA"/>
    <property type="match status" value="1"/>
</dbReference>
<dbReference type="Pfam" id="PF00308">
    <property type="entry name" value="Bac_DnaA"/>
    <property type="match status" value="1"/>
</dbReference>
<dbReference type="Pfam" id="PF08299">
    <property type="entry name" value="Bac_DnaA_C"/>
    <property type="match status" value="1"/>
</dbReference>
<dbReference type="Pfam" id="PF11638">
    <property type="entry name" value="DnaA_N"/>
    <property type="match status" value="1"/>
</dbReference>
<dbReference type="PRINTS" id="PR00051">
    <property type="entry name" value="DNAA"/>
</dbReference>
<dbReference type="SMART" id="SM00382">
    <property type="entry name" value="AAA"/>
    <property type="match status" value="1"/>
</dbReference>
<dbReference type="SMART" id="SM00760">
    <property type="entry name" value="Bac_DnaA_C"/>
    <property type="match status" value="1"/>
</dbReference>
<dbReference type="SUPFAM" id="SSF52540">
    <property type="entry name" value="P-loop containing nucleoside triphosphate hydrolases"/>
    <property type="match status" value="1"/>
</dbReference>
<dbReference type="SUPFAM" id="SSF48295">
    <property type="entry name" value="TrpR-like"/>
    <property type="match status" value="1"/>
</dbReference>
<dbReference type="PROSITE" id="PS01008">
    <property type="entry name" value="DNAA"/>
    <property type="match status" value="1"/>
</dbReference>
<feature type="chain" id="PRO_1000122033" description="Chromosomal replication initiator protein DnaA">
    <location>
        <begin position="1"/>
        <end position="442"/>
    </location>
</feature>
<feature type="region of interest" description="Domain I, interacts with DnaA modulators" evidence="1">
    <location>
        <begin position="1"/>
        <end position="75"/>
    </location>
</feature>
<feature type="region of interest" description="Domain II" evidence="1">
    <location>
        <begin position="75"/>
        <end position="104"/>
    </location>
</feature>
<feature type="region of interest" description="Domain III, AAA+ region" evidence="1">
    <location>
        <begin position="105"/>
        <end position="322"/>
    </location>
</feature>
<feature type="region of interest" description="Domain IV, binds dsDNA" evidence="1">
    <location>
        <begin position="323"/>
        <end position="442"/>
    </location>
</feature>
<feature type="binding site" evidence="1">
    <location>
        <position position="150"/>
    </location>
    <ligand>
        <name>ATP</name>
        <dbReference type="ChEBI" id="CHEBI:30616"/>
    </ligand>
</feature>
<feature type="binding site" evidence="1">
    <location>
        <position position="152"/>
    </location>
    <ligand>
        <name>ATP</name>
        <dbReference type="ChEBI" id="CHEBI:30616"/>
    </ligand>
</feature>
<feature type="binding site" evidence="1">
    <location>
        <position position="153"/>
    </location>
    <ligand>
        <name>ATP</name>
        <dbReference type="ChEBI" id="CHEBI:30616"/>
    </ligand>
</feature>
<feature type="binding site" evidence="1">
    <location>
        <position position="154"/>
    </location>
    <ligand>
        <name>ATP</name>
        <dbReference type="ChEBI" id="CHEBI:30616"/>
    </ligand>
</feature>
<protein>
    <recommendedName>
        <fullName evidence="1">Chromosomal replication initiator protein DnaA</fullName>
    </recommendedName>
</protein>
<comment type="function">
    <text evidence="1">Plays an essential role in the initiation and regulation of chromosomal replication. ATP-DnaA binds to the origin of replication (oriC) to initiate formation of the DNA replication initiation complex once per cell cycle. Binds the DnaA box (a 9 base pair repeat at the origin) and separates the double-stranded (ds)DNA. Forms a right-handed helical filament on oriC DNA; dsDNA binds to the exterior of the filament while single-stranded (ss)DNA is stabiized in the filament's interior. The ATP-DnaA-oriC complex binds and stabilizes one strand of the AT-rich DNA unwinding element (DUE), permitting loading of DNA polymerase. After initiation quickly degrades to an ADP-DnaA complex that is not apt for DNA replication. Binds acidic phospholipids.</text>
</comment>
<comment type="subunit">
    <text evidence="1">Oligomerizes as a right-handed, spiral filament on DNA at oriC.</text>
</comment>
<comment type="subcellular location">
    <subcellularLocation>
        <location evidence="1">Cytoplasm</location>
    </subcellularLocation>
</comment>
<comment type="domain">
    <text evidence="1">Domain I is involved in oligomerization and binding regulators, domain II is flexibile and of varying length in different bacteria, domain III forms the AAA+ region, while domain IV binds dsDNA.</text>
</comment>
<comment type="similarity">
    <text evidence="1">Belongs to the DnaA family.</text>
</comment>